<feature type="chain" id="PRO_1000021345" description="Shikimate dehydrogenase (NADP(+))">
    <location>
        <begin position="1"/>
        <end position="284"/>
    </location>
</feature>
<feature type="active site" description="Proton acceptor" evidence="1">
    <location>
        <position position="71"/>
    </location>
</feature>
<feature type="binding site" evidence="1">
    <location>
        <begin position="20"/>
        <end position="22"/>
    </location>
    <ligand>
        <name>shikimate</name>
        <dbReference type="ChEBI" id="CHEBI:36208"/>
    </ligand>
</feature>
<feature type="binding site" evidence="1">
    <location>
        <position position="67"/>
    </location>
    <ligand>
        <name>shikimate</name>
        <dbReference type="ChEBI" id="CHEBI:36208"/>
    </ligand>
</feature>
<feature type="binding site" evidence="1">
    <location>
        <position position="83"/>
    </location>
    <ligand>
        <name>NADP(+)</name>
        <dbReference type="ChEBI" id="CHEBI:58349"/>
    </ligand>
</feature>
<feature type="binding site" evidence="1">
    <location>
        <position position="92"/>
    </location>
    <ligand>
        <name>shikimate</name>
        <dbReference type="ChEBI" id="CHEBI:36208"/>
    </ligand>
</feature>
<feature type="binding site" evidence="1">
    <location>
        <position position="107"/>
    </location>
    <ligand>
        <name>shikimate</name>
        <dbReference type="ChEBI" id="CHEBI:36208"/>
    </ligand>
</feature>
<feature type="binding site" evidence="1">
    <location>
        <begin position="129"/>
        <end position="133"/>
    </location>
    <ligand>
        <name>NADP(+)</name>
        <dbReference type="ChEBI" id="CHEBI:58349"/>
    </ligand>
</feature>
<feature type="binding site" evidence="1">
    <location>
        <position position="227"/>
    </location>
    <ligand>
        <name>NADP(+)</name>
        <dbReference type="ChEBI" id="CHEBI:58349"/>
    </ligand>
</feature>
<feature type="binding site" evidence="1">
    <location>
        <position position="229"/>
    </location>
    <ligand>
        <name>shikimate</name>
        <dbReference type="ChEBI" id="CHEBI:36208"/>
    </ligand>
</feature>
<feature type="binding site" evidence="1">
    <location>
        <position position="250"/>
    </location>
    <ligand>
        <name>NADP(+)</name>
        <dbReference type="ChEBI" id="CHEBI:58349"/>
    </ligand>
</feature>
<name>AROE_STRP2</name>
<gene>
    <name evidence="1" type="primary">aroE</name>
    <name type="ordered locus">SPD_1210</name>
</gene>
<sequence length="284" mass="31270">MKLDGYTRLAAVVANPIKHSISPFIHNRAFEATATNGAYVAWEIEASDLVETVANIRRYQMFGINLSMPYKEQVIPYLDKLSDEARLIGAVNTVVNENGNLIGYNTDGKGFFKCLPSFTISGKKMTLLGAGGAAKSILAQAILDGVSQISVFVRSVSMEKTRPYLDKLQEQTGFKVDLCALEYVSELQARIAESDLLVNATSVGMDGQSSPVPENIVLPETLLVADIIYQPFETPFLKWARSQGNPAVNGLGMLLYQAAEAFQLWTGKEMPTEEIWQSLTEKYQ</sequence>
<reference key="1">
    <citation type="journal article" date="2007" name="J. Bacteriol.">
        <title>Genome sequence of Avery's virulent serotype 2 strain D39 of Streptococcus pneumoniae and comparison with that of unencapsulated laboratory strain R6.</title>
        <authorList>
            <person name="Lanie J.A."/>
            <person name="Ng W.-L."/>
            <person name="Kazmierczak K.M."/>
            <person name="Andrzejewski T.M."/>
            <person name="Davidsen T.M."/>
            <person name="Wayne K.J."/>
            <person name="Tettelin H."/>
            <person name="Glass J.I."/>
            <person name="Winkler M.E."/>
        </authorList>
    </citation>
    <scope>NUCLEOTIDE SEQUENCE [LARGE SCALE GENOMIC DNA]</scope>
    <source>
        <strain>D39 / NCTC 7466</strain>
    </source>
</reference>
<accession>Q04JX1</accession>
<keyword id="KW-0028">Amino-acid biosynthesis</keyword>
<keyword id="KW-0057">Aromatic amino acid biosynthesis</keyword>
<keyword id="KW-0521">NADP</keyword>
<keyword id="KW-0560">Oxidoreductase</keyword>
<keyword id="KW-1185">Reference proteome</keyword>
<proteinExistence type="inferred from homology"/>
<organism>
    <name type="scientific">Streptococcus pneumoniae serotype 2 (strain D39 / NCTC 7466)</name>
    <dbReference type="NCBI Taxonomy" id="373153"/>
    <lineage>
        <taxon>Bacteria</taxon>
        <taxon>Bacillati</taxon>
        <taxon>Bacillota</taxon>
        <taxon>Bacilli</taxon>
        <taxon>Lactobacillales</taxon>
        <taxon>Streptococcaceae</taxon>
        <taxon>Streptococcus</taxon>
    </lineage>
</organism>
<comment type="function">
    <text evidence="1">Involved in the biosynthesis of the chorismate, which leads to the biosynthesis of aromatic amino acids. Catalyzes the reversible NADPH linked reduction of 3-dehydroshikimate (DHSA) to yield shikimate (SA).</text>
</comment>
<comment type="catalytic activity">
    <reaction evidence="1">
        <text>shikimate + NADP(+) = 3-dehydroshikimate + NADPH + H(+)</text>
        <dbReference type="Rhea" id="RHEA:17737"/>
        <dbReference type="ChEBI" id="CHEBI:15378"/>
        <dbReference type="ChEBI" id="CHEBI:16630"/>
        <dbReference type="ChEBI" id="CHEBI:36208"/>
        <dbReference type="ChEBI" id="CHEBI:57783"/>
        <dbReference type="ChEBI" id="CHEBI:58349"/>
        <dbReference type="EC" id="1.1.1.25"/>
    </reaction>
</comment>
<comment type="pathway">
    <text evidence="1">Metabolic intermediate biosynthesis; chorismate biosynthesis; chorismate from D-erythrose 4-phosphate and phosphoenolpyruvate: step 4/7.</text>
</comment>
<comment type="subunit">
    <text evidence="1">Homodimer.</text>
</comment>
<comment type="similarity">
    <text evidence="1">Belongs to the shikimate dehydrogenase family.</text>
</comment>
<protein>
    <recommendedName>
        <fullName evidence="1">Shikimate dehydrogenase (NADP(+))</fullName>
        <shortName evidence="1">SDH</shortName>
        <ecNumber evidence="1">1.1.1.25</ecNumber>
    </recommendedName>
</protein>
<dbReference type="EC" id="1.1.1.25" evidence="1"/>
<dbReference type="EMBL" id="CP000410">
    <property type="protein sequence ID" value="ABJ54332.1"/>
    <property type="molecule type" value="Genomic_DNA"/>
</dbReference>
<dbReference type="RefSeq" id="WP_000762485.1">
    <property type="nucleotide sequence ID" value="NZ_JAMLJR010000005.1"/>
</dbReference>
<dbReference type="SMR" id="Q04JX1"/>
<dbReference type="PaxDb" id="373153-SPD_1210"/>
<dbReference type="KEGG" id="spd:SPD_1210"/>
<dbReference type="eggNOG" id="COG0169">
    <property type="taxonomic scope" value="Bacteria"/>
</dbReference>
<dbReference type="HOGENOM" id="CLU_044063_4_4_9"/>
<dbReference type="BioCyc" id="SPNE373153:G1G6V-1308-MONOMER"/>
<dbReference type="UniPathway" id="UPA00053">
    <property type="reaction ID" value="UER00087"/>
</dbReference>
<dbReference type="Proteomes" id="UP000001452">
    <property type="component" value="Chromosome"/>
</dbReference>
<dbReference type="GO" id="GO:0050661">
    <property type="term" value="F:NADP binding"/>
    <property type="evidence" value="ECO:0007669"/>
    <property type="project" value="InterPro"/>
</dbReference>
<dbReference type="GO" id="GO:0004764">
    <property type="term" value="F:shikimate 3-dehydrogenase (NADP+) activity"/>
    <property type="evidence" value="ECO:0007669"/>
    <property type="project" value="UniProtKB-UniRule"/>
</dbReference>
<dbReference type="GO" id="GO:0008652">
    <property type="term" value="P:amino acid biosynthetic process"/>
    <property type="evidence" value="ECO:0007669"/>
    <property type="project" value="UniProtKB-KW"/>
</dbReference>
<dbReference type="GO" id="GO:0009073">
    <property type="term" value="P:aromatic amino acid family biosynthetic process"/>
    <property type="evidence" value="ECO:0007669"/>
    <property type="project" value="UniProtKB-KW"/>
</dbReference>
<dbReference type="GO" id="GO:0009423">
    <property type="term" value="P:chorismate biosynthetic process"/>
    <property type="evidence" value="ECO:0007669"/>
    <property type="project" value="UniProtKB-UniRule"/>
</dbReference>
<dbReference type="GO" id="GO:0019632">
    <property type="term" value="P:shikimate metabolic process"/>
    <property type="evidence" value="ECO:0007669"/>
    <property type="project" value="InterPro"/>
</dbReference>
<dbReference type="CDD" id="cd01065">
    <property type="entry name" value="NAD_bind_Shikimate_DH"/>
    <property type="match status" value="1"/>
</dbReference>
<dbReference type="FunFam" id="3.40.50.10860:FF:000004">
    <property type="entry name" value="Quinate/shikimate dehydrogenase"/>
    <property type="match status" value="1"/>
</dbReference>
<dbReference type="FunFam" id="3.40.50.720:FF:000505">
    <property type="entry name" value="Shikimate dehydrogenase (NADP(+))"/>
    <property type="match status" value="1"/>
</dbReference>
<dbReference type="Gene3D" id="3.40.50.10860">
    <property type="entry name" value="Leucine Dehydrogenase, chain A, domain 1"/>
    <property type="match status" value="1"/>
</dbReference>
<dbReference type="Gene3D" id="3.40.50.720">
    <property type="entry name" value="NAD(P)-binding Rossmann-like Domain"/>
    <property type="match status" value="1"/>
</dbReference>
<dbReference type="HAMAP" id="MF_00222">
    <property type="entry name" value="Shikimate_DH_AroE"/>
    <property type="match status" value="1"/>
</dbReference>
<dbReference type="InterPro" id="IPR046346">
    <property type="entry name" value="Aminoacid_DH-like_N_sf"/>
</dbReference>
<dbReference type="InterPro" id="IPR036291">
    <property type="entry name" value="NAD(P)-bd_dom_sf"/>
</dbReference>
<dbReference type="InterPro" id="IPR041121">
    <property type="entry name" value="SDH_C"/>
</dbReference>
<dbReference type="InterPro" id="IPR011342">
    <property type="entry name" value="Shikimate_DH"/>
</dbReference>
<dbReference type="InterPro" id="IPR013708">
    <property type="entry name" value="Shikimate_DH-bd_N"/>
</dbReference>
<dbReference type="InterPro" id="IPR022893">
    <property type="entry name" value="Shikimate_DH_fam"/>
</dbReference>
<dbReference type="NCBIfam" id="TIGR00507">
    <property type="entry name" value="aroE"/>
    <property type="match status" value="1"/>
</dbReference>
<dbReference type="NCBIfam" id="NF001315">
    <property type="entry name" value="PRK00258.2-4"/>
    <property type="match status" value="1"/>
</dbReference>
<dbReference type="PANTHER" id="PTHR21089:SF1">
    <property type="entry name" value="BIFUNCTIONAL 3-DEHYDROQUINATE DEHYDRATASE_SHIKIMATE DEHYDROGENASE, CHLOROPLASTIC"/>
    <property type="match status" value="1"/>
</dbReference>
<dbReference type="PANTHER" id="PTHR21089">
    <property type="entry name" value="SHIKIMATE DEHYDROGENASE"/>
    <property type="match status" value="1"/>
</dbReference>
<dbReference type="Pfam" id="PF18317">
    <property type="entry name" value="SDH_C"/>
    <property type="match status" value="1"/>
</dbReference>
<dbReference type="Pfam" id="PF08501">
    <property type="entry name" value="Shikimate_dh_N"/>
    <property type="match status" value="1"/>
</dbReference>
<dbReference type="SUPFAM" id="SSF53223">
    <property type="entry name" value="Aminoacid dehydrogenase-like, N-terminal domain"/>
    <property type="match status" value="1"/>
</dbReference>
<dbReference type="SUPFAM" id="SSF51735">
    <property type="entry name" value="NAD(P)-binding Rossmann-fold domains"/>
    <property type="match status" value="1"/>
</dbReference>
<evidence type="ECO:0000255" key="1">
    <source>
        <dbReference type="HAMAP-Rule" id="MF_00222"/>
    </source>
</evidence>